<sequence>MAERKPNGGSGGASTSSSGTNLLFSSSATEFSFNVPFIPVTQASASPASLLLPGEDSTDVGEEDSFLGQTSIHTSAPQTFSYFSQVSSSSDPFGNIGQSPLTTAATSVGQSGFPKPLTALPFTTGSQDVSNAFSPSISKAQPGAPPSSLMGINSYLPSQPSSLPPSYFGNQPQGIPQPGYNPYRHTPGSSRANPYIAPPQLQQCQTPGPPAHPPPSGPPVQMYQMPPGSLPPVPSSVQSPAQQQVPARPGAPSVQVPSPFLLQNQYEPVQPHWFYCKEVEYKQLWMPFSVFDSLNLEEIYNSVQPDPESVVLGTDGGRYDVYLYDRIRKAAYWEEEPAEVRRCTWFYKGDTDSRFIPYTEEFSEKLEAEYKKAVTTNQWHRRLEFPSGETIVMHNPKVIVQFQPSSVPDEWGTTQDGQTRPRVVKRGIDDNLDEIPDGEMPQVDHLVFVVHGIGPVCDLRFRSIIECVDDFRVVSLKLLRTHFKKSLDDGKVSRVEFLPVHWHSSLGGDATGVDRNIKKITLPSIGRFRHFTNETLLDILFYNSPTYCQTIVEKVGMEINHLHALFMSRNPDFKGGVSVAGHSLGSLILFDILSNQKDLNLSKCPGPLAVANGVVKQLHFQEKQMPEEPKLTLDESYDLVVENKEVLTLQETLEALSLSEYFSTFEKEKIDMESLLMCTVDDLKEMGIPLGPRKKIANFVEHKAAKLKKAASEKKAVAATSTKGQEQSAQKTKDMASLPSESNEPKRKLPVGACVSSVCVNYESFEVGAGQVSVAYNSLDFEPEIFFALGSPIAMFLTIRGVDRIDENYSLPTCKGFFNIYHPLDPVAYRLEPMIVPDLDLKAVLIPHHKGRKRLHLELKESLSRMGSDLKQGFISSLKSAWQTLNEFARAHTSSTQLQEELEKVANQIKEEEEKQVVEAEKVVESPDFSKDEDYLGKVGMLNGGRRIDYVLQEKPIESFNEYLFALQSHLCYWESEDTALLLLKEIYRTMNISPEQPQH</sequence>
<comment type="function">
    <text evidence="4 5 6">Plays a role in the organization of endoplasmic reticulum exit sites. Specifically binds to phosphatidylinositol 3-phosphate (PI(3)P), phosphatidylinositol 4-phosphate (PI(4)P) and phosphatidylinositol 5-phosphate (PI(5)P).</text>
</comment>
<comment type="subunit">
    <text evidence="4">Interacts with SEC23A.</text>
</comment>
<comment type="interaction">
    <interactant intactId="EBI-1767971">
        <id>Q9Y6Y8</id>
    </interactant>
    <interactant intactId="EBI-747101">
        <id>Q9Y547</id>
        <label>IFT25</label>
    </interactant>
    <organismsDiffer>false</organismsDiffer>
    <experiments>3</experiments>
</comment>
<comment type="interaction">
    <interactant intactId="EBI-1767971">
        <id>Q9Y6Y8</id>
    </interactant>
    <interactant intactId="EBI-81088">
        <id>Q15436</id>
        <label>SEC23A</label>
    </interactant>
    <organismsDiffer>false</organismsDiffer>
    <experiments>5</experiments>
</comment>
<comment type="interaction">
    <interactant intactId="EBI-1767971">
        <id>Q9Y6Y8</id>
    </interactant>
    <interactant intactId="EBI-10172867">
        <id>A1L4H1</id>
        <label>SSC5D</label>
    </interactant>
    <organismsDiffer>false</organismsDiffer>
    <experiments>6</experiments>
</comment>
<comment type="interaction">
    <interactant intactId="EBI-1767971">
        <id>Q9Y6Y8</id>
    </interactant>
    <interactant intactId="EBI-742790">
        <id>Q13049</id>
        <label>TRIM32</label>
    </interactant>
    <organismsDiffer>false</organismsDiffer>
    <experiments>2</experiments>
</comment>
<comment type="interaction">
    <interactant intactId="EBI-1767971">
        <id>Q9Y6Y8</id>
    </interactant>
    <interactant intactId="EBI-2799703">
        <id>O95070</id>
        <label>YIF1A</label>
    </interactant>
    <organismsDiffer>false</organismsDiffer>
    <experiments>3</experiments>
</comment>
<comment type="subcellular location">
    <subcellularLocation>
        <location>Cytoplasmic vesicle</location>
        <location>COPII-coated vesicle membrane</location>
        <topology>Peripheral membrane protein</topology>
        <orientation>Cytoplasmic side</orientation>
    </subcellularLocation>
    <subcellularLocation>
        <location evidence="10">Endoplasmic reticulum</location>
    </subcellularLocation>
</comment>
<comment type="alternative products">
    <event type="alternative splicing"/>
    <isoform>
        <id>Q9Y6Y8-1</id>
        <name>1</name>
        <sequence type="displayed"/>
    </isoform>
    <isoform>
        <id>Q9Y6Y8-2</id>
        <name>2</name>
        <sequence type="described" ref="VSP_011831 VSP_011832"/>
    </isoform>
</comment>
<comment type="tissue specificity">
    <text evidence="4">Ubiquitously expressed with stronger levels detected in heart, liver and skeletal muscle.</text>
</comment>
<comment type="similarity">
    <text evidence="10">Belongs to the PA-PLA1 family.</text>
</comment>
<comment type="caution">
    <text evidence="10">Although belonging to the PA-PL1 family, does not seem to have any phospholipase activity.</text>
</comment>
<comment type="sequence caution" evidence="10">
    <conflict type="frameshift">
        <sequence resource="EMBL-CDS" id="AAP35401"/>
    </conflict>
</comment>
<feature type="chain" id="PRO_0000097554" description="SEC23-interacting protein">
    <location>
        <begin position="1"/>
        <end position="1000"/>
    </location>
</feature>
<feature type="domain" description="SAM">
    <location>
        <begin position="644"/>
        <end position="707"/>
    </location>
</feature>
<feature type="domain" description="DDHD" evidence="2">
    <location>
        <begin position="779"/>
        <end position="989"/>
    </location>
</feature>
<feature type="region of interest" description="Interaction with SEC23A" evidence="4">
    <location>
        <begin position="1"/>
        <end position="367"/>
    </location>
</feature>
<feature type="region of interest" description="Disordered" evidence="3">
    <location>
        <begin position="133"/>
        <end position="252"/>
    </location>
</feature>
<feature type="region of interest" description="Disordered" evidence="3">
    <location>
        <begin position="716"/>
        <end position="748"/>
    </location>
</feature>
<feature type="compositionally biased region" description="Low complexity" evidence="3">
    <location>
        <begin position="154"/>
        <end position="167"/>
    </location>
</feature>
<feature type="compositionally biased region" description="Pro residues" evidence="3">
    <location>
        <begin position="207"/>
        <end position="218"/>
    </location>
</feature>
<feature type="compositionally biased region" description="Low complexity" evidence="3">
    <location>
        <begin position="235"/>
        <end position="246"/>
    </location>
</feature>
<feature type="modified residue" description="Phosphoserine" evidence="1">
    <location>
        <position position="737"/>
    </location>
</feature>
<feature type="modified residue" description="Phosphoserine" evidence="11 12 13 14">
    <location>
        <position position="926"/>
    </location>
</feature>
<feature type="splice variant" id="VSP_011831" description="In isoform 2." evidence="9">
    <original>AEKVV</original>
    <variation>GKFDI</variation>
    <location>
        <begin position="920"/>
        <end position="924"/>
    </location>
</feature>
<feature type="splice variant" id="VSP_011832" description="In isoform 2." evidence="9">
    <location>
        <begin position="925"/>
        <end position="1000"/>
    </location>
</feature>
<feature type="sequence variant" id="VAR_019806" description="In dbSNP:rs2475298." evidence="7 8">
    <original>K</original>
    <variation>E</variation>
    <location>
        <position position="644"/>
    </location>
</feature>
<feature type="sequence conflict" description="In Ref. 2; AAO15299." evidence="10" ref="2">
    <original>F</original>
    <variation>L</variation>
    <location>
        <position position="590"/>
    </location>
</feature>
<evidence type="ECO:0000250" key="1">
    <source>
        <dbReference type="UniProtKB" id="Q6NZC7"/>
    </source>
</evidence>
<evidence type="ECO:0000255" key="2">
    <source>
        <dbReference type="PROSITE-ProRule" id="PRU00378"/>
    </source>
</evidence>
<evidence type="ECO:0000256" key="3">
    <source>
        <dbReference type="SAM" id="MobiDB-lite"/>
    </source>
</evidence>
<evidence type="ECO:0000269" key="4">
    <source>
    </source>
</evidence>
<evidence type="ECO:0000269" key="5">
    <source>
    </source>
</evidence>
<evidence type="ECO:0000269" key="6">
    <source>
    </source>
</evidence>
<evidence type="ECO:0000269" key="7">
    <source ref="2"/>
</evidence>
<evidence type="ECO:0000269" key="8">
    <source ref="3"/>
</evidence>
<evidence type="ECO:0000303" key="9">
    <source ref="2"/>
</evidence>
<evidence type="ECO:0000305" key="10"/>
<evidence type="ECO:0007744" key="11">
    <source>
    </source>
</evidence>
<evidence type="ECO:0007744" key="12">
    <source>
    </source>
</evidence>
<evidence type="ECO:0007744" key="13">
    <source>
    </source>
</evidence>
<evidence type="ECO:0007744" key="14">
    <source>
    </source>
</evidence>
<organism>
    <name type="scientific">Homo sapiens</name>
    <name type="common">Human</name>
    <dbReference type="NCBI Taxonomy" id="9606"/>
    <lineage>
        <taxon>Eukaryota</taxon>
        <taxon>Metazoa</taxon>
        <taxon>Chordata</taxon>
        <taxon>Craniata</taxon>
        <taxon>Vertebrata</taxon>
        <taxon>Euteleostomi</taxon>
        <taxon>Mammalia</taxon>
        <taxon>Eutheria</taxon>
        <taxon>Euarchontoglires</taxon>
        <taxon>Primates</taxon>
        <taxon>Haplorrhini</taxon>
        <taxon>Catarrhini</taxon>
        <taxon>Hominidae</taxon>
        <taxon>Homo</taxon>
    </lineage>
</organism>
<protein>
    <recommendedName>
        <fullName>SEC23-interacting protein</fullName>
    </recommendedName>
    <alternativeName>
        <fullName>p125</fullName>
    </alternativeName>
</protein>
<gene>
    <name type="primary">SEC23IP</name>
    <name type="ORF">MSTP053</name>
</gene>
<accession>Q9Y6Y8</accession>
<accession>D3DRD2</accession>
<accession>Q8IXH5</accession>
<accession>Q9BUK5</accession>
<dbReference type="EMBL" id="AB019435">
    <property type="protein sequence ID" value="BAA77392.1"/>
    <property type="molecule type" value="mRNA"/>
</dbReference>
<dbReference type="EMBL" id="AF116723">
    <property type="protein sequence ID" value="AAO15299.1"/>
    <property type="molecule type" value="mRNA"/>
</dbReference>
<dbReference type="EMBL" id="CH471066">
    <property type="protein sequence ID" value="EAW49372.1"/>
    <property type="molecule type" value="Genomic_DNA"/>
</dbReference>
<dbReference type="EMBL" id="CH471066">
    <property type="protein sequence ID" value="EAW49373.1"/>
    <property type="molecule type" value="Genomic_DNA"/>
</dbReference>
<dbReference type="EMBL" id="BC063800">
    <property type="protein sequence ID" value="AAH63800.1"/>
    <property type="molecule type" value="mRNA"/>
</dbReference>
<dbReference type="EMBL" id="BT006755">
    <property type="protein sequence ID" value="AAP35401.1"/>
    <property type="status" value="ALT_FRAME"/>
    <property type="molecule type" value="mRNA"/>
</dbReference>
<dbReference type="CCDS" id="CCDS7618.1">
    <molecule id="Q9Y6Y8-1"/>
</dbReference>
<dbReference type="RefSeq" id="NP_009121.1">
    <molecule id="Q9Y6Y8-1"/>
    <property type="nucleotide sequence ID" value="NM_007190.4"/>
</dbReference>
<dbReference type="RefSeq" id="XP_047280493.1">
    <molecule id="Q9Y6Y8-1"/>
    <property type="nucleotide sequence ID" value="XM_047424537.1"/>
</dbReference>
<dbReference type="SMR" id="Q9Y6Y8"/>
<dbReference type="BioGRID" id="116365">
    <property type="interactions" value="268"/>
</dbReference>
<dbReference type="CORUM" id="Q9Y6Y8"/>
<dbReference type="FunCoup" id="Q9Y6Y8">
    <property type="interactions" value="4232"/>
</dbReference>
<dbReference type="IntAct" id="Q9Y6Y8">
    <property type="interactions" value="62"/>
</dbReference>
<dbReference type="MINT" id="Q9Y6Y8"/>
<dbReference type="STRING" id="9606.ENSP00000358071"/>
<dbReference type="SwissLipids" id="SLP:000001071"/>
<dbReference type="GlyCosmos" id="Q9Y6Y8">
    <property type="glycosylation" value="22 sites, 2 glycans"/>
</dbReference>
<dbReference type="GlyGen" id="Q9Y6Y8">
    <property type="glycosylation" value="22 sites, 2 O-linked glycans (22 sites)"/>
</dbReference>
<dbReference type="iPTMnet" id="Q9Y6Y8"/>
<dbReference type="MetOSite" id="Q9Y6Y8"/>
<dbReference type="PhosphoSitePlus" id="Q9Y6Y8"/>
<dbReference type="BioMuta" id="SEC23IP"/>
<dbReference type="DMDM" id="55584014"/>
<dbReference type="jPOST" id="Q9Y6Y8"/>
<dbReference type="MassIVE" id="Q9Y6Y8"/>
<dbReference type="PaxDb" id="9606-ENSP00000358071"/>
<dbReference type="PeptideAtlas" id="Q9Y6Y8"/>
<dbReference type="ProteomicsDB" id="86828">
    <molecule id="Q9Y6Y8-1"/>
</dbReference>
<dbReference type="ProteomicsDB" id="86829">
    <molecule id="Q9Y6Y8-2"/>
</dbReference>
<dbReference type="Pumba" id="Q9Y6Y8"/>
<dbReference type="Antibodypedia" id="32172">
    <property type="antibodies" value="194 antibodies from 26 providers"/>
</dbReference>
<dbReference type="DNASU" id="11196"/>
<dbReference type="Ensembl" id="ENST00000369075.8">
    <molecule id="Q9Y6Y8-1"/>
    <property type="protein sequence ID" value="ENSP00000358071.3"/>
    <property type="gene ID" value="ENSG00000107651.15"/>
</dbReference>
<dbReference type="GeneID" id="11196"/>
<dbReference type="KEGG" id="hsa:11196"/>
<dbReference type="MANE-Select" id="ENST00000369075.8">
    <property type="protein sequence ID" value="ENSP00000358071.3"/>
    <property type="RefSeq nucleotide sequence ID" value="NM_007190.4"/>
    <property type="RefSeq protein sequence ID" value="NP_009121.1"/>
</dbReference>
<dbReference type="UCSC" id="uc001leu.3">
    <molecule id="Q9Y6Y8-1"/>
    <property type="organism name" value="human"/>
</dbReference>
<dbReference type="AGR" id="HGNC:17018"/>
<dbReference type="CTD" id="11196"/>
<dbReference type="DisGeNET" id="11196"/>
<dbReference type="GeneCards" id="SEC23IP"/>
<dbReference type="HGNC" id="HGNC:17018">
    <property type="gene designation" value="SEC23IP"/>
</dbReference>
<dbReference type="HPA" id="ENSG00000107651">
    <property type="expression patterns" value="Low tissue specificity"/>
</dbReference>
<dbReference type="MIM" id="617852">
    <property type="type" value="gene"/>
</dbReference>
<dbReference type="neXtProt" id="NX_Q9Y6Y8"/>
<dbReference type="OpenTargets" id="ENSG00000107651"/>
<dbReference type="PharmGKB" id="PA134964657"/>
<dbReference type="VEuPathDB" id="HostDB:ENSG00000107651"/>
<dbReference type="eggNOG" id="KOG2308">
    <property type="taxonomic scope" value="Eukaryota"/>
</dbReference>
<dbReference type="GeneTree" id="ENSGT00940000156602"/>
<dbReference type="HOGENOM" id="CLU_006932_4_0_1"/>
<dbReference type="InParanoid" id="Q9Y6Y8"/>
<dbReference type="OMA" id="WQNENIV"/>
<dbReference type="OrthoDB" id="69269at2759"/>
<dbReference type="PAN-GO" id="Q9Y6Y8">
    <property type="GO annotations" value="3 GO annotations based on evolutionary models"/>
</dbReference>
<dbReference type="PhylomeDB" id="Q9Y6Y8"/>
<dbReference type="TreeFam" id="TF314133"/>
<dbReference type="PathwayCommons" id="Q9Y6Y8"/>
<dbReference type="Reactome" id="R-HSA-204005">
    <property type="pathway name" value="COPII-mediated vesicle transport"/>
</dbReference>
<dbReference type="SignaLink" id="Q9Y6Y8"/>
<dbReference type="SIGNOR" id="Q9Y6Y8"/>
<dbReference type="BioGRID-ORCS" id="11196">
    <property type="hits" value="43 hits in 1156 CRISPR screens"/>
</dbReference>
<dbReference type="ChiTaRS" id="SEC23IP">
    <property type="organism name" value="human"/>
</dbReference>
<dbReference type="GeneWiki" id="SEC23IP"/>
<dbReference type="GenomeRNAi" id="11196"/>
<dbReference type="Pharos" id="Q9Y6Y8">
    <property type="development level" value="Tbio"/>
</dbReference>
<dbReference type="PRO" id="PR:Q9Y6Y8"/>
<dbReference type="Proteomes" id="UP000005640">
    <property type="component" value="Chromosome 10"/>
</dbReference>
<dbReference type="RNAct" id="Q9Y6Y8">
    <property type="molecule type" value="protein"/>
</dbReference>
<dbReference type="Bgee" id="ENSG00000107651">
    <property type="expression patterns" value="Expressed in colonic epithelium and 203 other cell types or tissues"/>
</dbReference>
<dbReference type="ExpressionAtlas" id="Q9Y6Y8">
    <property type="expression patterns" value="baseline and differential"/>
</dbReference>
<dbReference type="GO" id="GO:0030134">
    <property type="term" value="C:COPII-coated ER to Golgi transport vesicle"/>
    <property type="evidence" value="ECO:0000318"/>
    <property type="project" value="GO_Central"/>
</dbReference>
<dbReference type="GO" id="GO:0005737">
    <property type="term" value="C:cytoplasm"/>
    <property type="evidence" value="ECO:0000318"/>
    <property type="project" value="GO_Central"/>
</dbReference>
<dbReference type="GO" id="GO:0005829">
    <property type="term" value="C:cytosol"/>
    <property type="evidence" value="ECO:0000304"/>
    <property type="project" value="Reactome"/>
</dbReference>
<dbReference type="GO" id="GO:0005783">
    <property type="term" value="C:endoplasmic reticulum"/>
    <property type="evidence" value="ECO:0007669"/>
    <property type="project" value="UniProtKB-SubCell"/>
</dbReference>
<dbReference type="GO" id="GO:0005793">
    <property type="term" value="C:endoplasmic reticulum-Golgi intermediate compartment"/>
    <property type="evidence" value="ECO:0000304"/>
    <property type="project" value="ProtInc"/>
</dbReference>
<dbReference type="GO" id="GO:0012507">
    <property type="term" value="C:ER to Golgi transport vesicle membrane"/>
    <property type="evidence" value="ECO:0007669"/>
    <property type="project" value="UniProtKB-SubCell"/>
</dbReference>
<dbReference type="GO" id="GO:0005794">
    <property type="term" value="C:Golgi apparatus"/>
    <property type="evidence" value="ECO:0000314"/>
    <property type="project" value="HPA"/>
</dbReference>
<dbReference type="GO" id="GO:0043231">
    <property type="term" value="C:intracellular membrane-bounded organelle"/>
    <property type="evidence" value="ECO:0000314"/>
    <property type="project" value="HPA"/>
</dbReference>
<dbReference type="GO" id="GO:0046872">
    <property type="term" value="F:metal ion binding"/>
    <property type="evidence" value="ECO:0007669"/>
    <property type="project" value="InterPro"/>
</dbReference>
<dbReference type="GO" id="GO:0004620">
    <property type="term" value="F:phospholipase activity"/>
    <property type="evidence" value="ECO:0000318"/>
    <property type="project" value="GO_Central"/>
</dbReference>
<dbReference type="GO" id="GO:0003723">
    <property type="term" value="F:RNA binding"/>
    <property type="evidence" value="ECO:0007005"/>
    <property type="project" value="UniProtKB"/>
</dbReference>
<dbReference type="GO" id="GO:0006888">
    <property type="term" value="P:endoplasmic reticulum to Golgi vesicle-mediated transport"/>
    <property type="evidence" value="ECO:0007669"/>
    <property type="project" value="InterPro"/>
</dbReference>
<dbReference type="GO" id="GO:0007030">
    <property type="term" value="P:Golgi organization"/>
    <property type="evidence" value="ECO:0000304"/>
    <property type="project" value="ProtInc"/>
</dbReference>
<dbReference type="GO" id="GO:0006886">
    <property type="term" value="P:intracellular protein transport"/>
    <property type="evidence" value="ECO:0000304"/>
    <property type="project" value="ProtInc"/>
</dbReference>
<dbReference type="CDD" id="cd09584">
    <property type="entry name" value="SAM_sec23ip"/>
    <property type="match status" value="1"/>
</dbReference>
<dbReference type="FunFam" id="1.10.150.50:FF:000047">
    <property type="entry name" value="SEC23 interacting protein"/>
    <property type="match status" value="1"/>
</dbReference>
<dbReference type="Gene3D" id="1.10.150.50">
    <property type="entry name" value="Transcription Factor, Ets-1"/>
    <property type="match status" value="1"/>
</dbReference>
<dbReference type="InterPro" id="IPR004177">
    <property type="entry name" value="DDHD_dom"/>
</dbReference>
<dbReference type="InterPro" id="IPR001660">
    <property type="entry name" value="SAM"/>
</dbReference>
<dbReference type="InterPro" id="IPR013761">
    <property type="entry name" value="SAM/pointed_sf"/>
</dbReference>
<dbReference type="InterPro" id="IPR037603">
    <property type="entry name" value="SEC23IP_SAM"/>
</dbReference>
<dbReference type="InterPro" id="IPR004170">
    <property type="entry name" value="WWE_dom"/>
</dbReference>
<dbReference type="PANTHER" id="PTHR23509">
    <property type="entry name" value="PA-PL1 PHOSPHOLIPASE FAMILY"/>
    <property type="match status" value="1"/>
</dbReference>
<dbReference type="PANTHER" id="PTHR23509:SF4">
    <property type="entry name" value="SEC23-INTERACTING PROTEIN"/>
    <property type="match status" value="1"/>
</dbReference>
<dbReference type="Pfam" id="PF02862">
    <property type="entry name" value="DDHD"/>
    <property type="match status" value="1"/>
</dbReference>
<dbReference type="Pfam" id="PF00536">
    <property type="entry name" value="SAM_1"/>
    <property type="match status" value="1"/>
</dbReference>
<dbReference type="Pfam" id="PF02825">
    <property type="entry name" value="WWE"/>
    <property type="match status" value="1"/>
</dbReference>
<dbReference type="Pfam" id="PF23464">
    <property type="entry name" value="WWE_3"/>
    <property type="match status" value="1"/>
</dbReference>
<dbReference type="SMART" id="SM01127">
    <property type="entry name" value="DDHD"/>
    <property type="match status" value="1"/>
</dbReference>
<dbReference type="SMART" id="SM00454">
    <property type="entry name" value="SAM"/>
    <property type="match status" value="1"/>
</dbReference>
<dbReference type="SUPFAM" id="SSF47769">
    <property type="entry name" value="SAM/Pointed domain"/>
    <property type="match status" value="1"/>
</dbReference>
<dbReference type="PROSITE" id="PS51043">
    <property type="entry name" value="DDHD"/>
    <property type="match status" value="1"/>
</dbReference>
<proteinExistence type="evidence at protein level"/>
<name>S23IP_HUMAN</name>
<keyword id="KW-0025">Alternative splicing</keyword>
<keyword id="KW-0968">Cytoplasmic vesicle</keyword>
<keyword id="KW-0903">Direct protein sequencing</keyword>
<keyword id="KW-0256">Endoplasmic reticulum</keyword>
<keyword id="KW-0472">Membrane</keyword>
<keyword id="KW-0597">Phosphoprotein</keyword>
<keyword id="KW-1267">Proteomics identification</keyword>
<keyword id="KW-1185">Reference proteome</keyword>
<reference key="1">
    <citation type="journal article" date="1999" name="J. Biol. Chem.">
        <title>p125 is a novel mammalian Sec23p-interacting protein with structural similarity to phospholipid-modifying proteins.</title>
        <authorList>
            <person name="Tani K."/>
            <person name="Mizoguchi T."/>
            <person name="Iwamatsu A."/>
            <person name="Hatsuzawa K."/>
            <person name="Tagaya M."/>
        </authorList>
    </citation>
    <scope>NUCLEOTIDE SEQUENCE [MRNA] (ISOFORM 1)</scope>
    <scope>PROTEIN SEQUENCE OF 320-324; 348-361; 397-410; 477-484; 591-596; 684-693; 695-700; 825-831; 853-866; 871-877 AND 985-997</scope>
    <scope>FUNCTION</scope>
    <scope>SUBCELLULAR LOCATION</scope>
    <scope>TISSUE SPECIFICITY</scope>
    <scope>INTERACTION WITH SEC23A</scope>
    <source>
        <tissue>Brain</tissue>
    </source>
</reference>
<reference key="2">
    <citation type="submission" date="1998-12" db="EMBL/GenBank/DDBJ databases">
        <authorList>
            <person name="Zhao B."/>
            <person name="Xu Y.Y."/>
            <person name="Liu Y.Q."/>
            <person name="Wang X.Y."/>
            <person name="Liu B."/>
            <person name="Ye J."/>
            <person name="Song L."/>
            <person name="Zhao Y."/>
            <person name="Cao H.Q."/>
            <person name="Zhao X.W."/>
            <person name="Gao Y."/>
            <person name="Liu L.S."/>
            <person name="Ding J.F."/>
            <person name="Gao R.L."/>
            <person name="Wu Q.Y."/>
            <person name="Qiang B.Q."/>
            <person name="Yuan J.G."/>
            <person name="Liew C.C."/>
            <person name="Zhao M.S."/>
            <person name="Hui R.T."/>
        </authorList>
    </citation>
    <scope>NUCLEOTIDE SEQUENCE [LARGE SCALE MRNA] (ISOFORM 2)</scope>
    <scope>VARIANT GLU-644</scope>
    <source>
        <tissue>Aorta</tissue>
    </source>
</reference>
<reference key="3">
    <citation type="submission" date="2005-09" db="EMBL/GenBank/DDBJ databases">
        <authorList>
            <person name="Mural R.J."/>
            <person name="Istrail S."/>
            <person name="Sutton G.G."/>
            <person name="Florea L."/>
            <person name="Halpern A.L."/>
            <person name="Mobarry C.M."/>
            <person name="Lippert R."/>
            <person name="Walenz B."/>
            <person name="Shatkay H."/>
            <person name="Dew I."/>
            <person name="Miller J.R."/>
            <person name="Flanigan M.J."/>
            <person name="Edwards N.J."/>
            <person name="Bolanos R."/>
            <person name="Fasulo D."/>
            <person name="Halldorsson B.V."/>
            <person name="Hannenhalli S."/>
            <person name="Turner R."/>
            <person name="Yooseph S."/>
            <person name="Lu F."/>
            <person name="Nusskern D.R."/>
            <person name="Shue B.C."/>
            <person name="Zheng X.H."/>
            <person name="Zhong F."/>
            <person name="Delcher A.L."/>
            <person name="Huson D.H."/>
            <person name="Kravitz S.A."/>
            <person name="Mouchard L."/>
            <person name="Reinert K."/>
            <person name="Remington K.A."/>
            <person name="Clark A.G."/>
            <person name="Waterman M.S."/>
            <person name="Eichler E.E."/>
            <person name="Adams M.D."/>
            <person name="Hunkapiller M.W."/>
            <person name="Myers E.W."/>
            <person name="Venter J.C."/>
        </authorList>
    </citation>
    <scope>NUCLEOTIDE SEQUENCE [LARGE SCALE GENOMIC DNA]</scope>
    <scope>VARIANT GLU-644</scope>
</reference>
<reference key="4">
    <citation type="journal article" date="2004" name="Genome Res.">
        <title>The status, quality, and expansion of the NIH full-length cDNA project: the Mammalian Gene Collection (MGC).</title>
        <authorList>
            <consortium name="The MGC Project Team"/>
        </authorList>
    </citation>
    <scope>NUCLEOTIDE SEQUENCE [LARGE SCALE MRNA] (ISOFORM 1)</scope>
    <source>
        <tissue>Uterus</tissue>
    </source>
</reference>
<reference key="5">
    <citation type="submission" date="2003-05" db="EMBL/GenBank/DDBJ databases">
        <title>Cloning of human full-length CDSs in BD Creator(TM) system donor vector.</title>
        <authorList>
            <person name="Kalnine N."/>
            <person name="Chen X."/>
            <person name="Rolfs A."/>
            <person name="Halleck A."/>
            <person name="Hines L."/>
            <person name="Eisenstein S."/>
            <person name="Koundinya M."/>
            <person name="Raphael J."/>
            <person name="Moreira D."/>
            <person name="Kelley T."/>
            <person name="LaBaer J."/>
            <person name="Lin Y."/>
            <person name="Phelan M."/>
            <person name="Farmer A."/>
        </authorList>
    </citation>
    <scope>NUCLEOTIDE SEQUENCE [LARGE SCALE MRNA] OF 1-487</scope>
</reference>
<reference key="6">
    <citation type="journal article" date="2002" name="J. Biol. Chem.">
        <title>A novel phospholipase A1 with sequence homology to a mammalian Sec23p-interacting protein, p125.</title>
        <authorList>
            <person name="Nakajima K."/>
            <person name="Sonoda H."/>
            <person name="Mizoguchi T."/>
            <person name="Aoki J."/>
            <person name="Arai H."/>
            <person name="Nagahama M."/>
            <person name="Tagaya M."/>
            <person name="Tani K."/>
        </authorList>
    </citation>
    <scope>LACK OF ENZYME ACTIVITY</scope>
</reference>
<reference key="7">
    <citation type="journal article" date="2005" name="J. Biol. Chem.">
        <title>p125 is localized in endoplasmic reticulum exit sites and involved in their organization.</title>
        <authorList>
            <person name="Shimoi W."/>
            <person name="Ezawa I."/>
            <person name="Nakamoto K."/>
            <person name="Uesaki S."/>
            <person name="Gabreski G."/>
            <person name="Aridor M."/>
            <person name="Yamamoto A."/>
            <person name="Nagahama M."/>
            <person name="Tagaya M."/>
            <person name="Tani K."/>
        </authorList>
    </citation>
    <scope>FUNCTION</scope>
    <scope>SUBCELLULAR LOCATION</scope>
</reference>
<reference key="8">
    <citation type="journal article" date="2008" name="Proc. Natl. Acad. Sci. U.S.A.">
        <title>A quantitative atlas of mitotic phosphorylation.</title>
        <authorList>
            <person name="Dephoure N."/>
            <person name="Zhou C."/>
            <person name="Villen J."/>
            <person name="Beausoleil S.A."/>
            <person name="Bakalarski C.E."/>
            <person name="Elledge S.J."/>
            <person name="Gygi S.P."/>
        </authorList>
    </citation>
    <scope>PHOSPHORYLATION [LARGE SCALE ANALYSIS] AT SER-926</scope>
    <scope>IDENTIFICATION BY MASS SPECTROMETRY [LARGE SCALE ANALYSIS]</scope>
    <source>
        <tissue>Cervix carcinoma</tissue>
    </source>
</reference>
<reference key="9">
    <citation type="journal article" date="2010" name="Sci. Signal.">
        <title>Quantitative phosphoproteomics reveals widespread full phosphorylation site occupancy during mitosis.</title>
        <authorList>
            <person name="Olsen J.V."/>
            <person name="Vermeulen M."/>
            <person name="Santamaria A."/>
            <person name="Kumar C."/>
            <person name="Miller M.L."/>
            <person name="Jensen L.J."/>
            <person name="Gnad F."/>
            <person name="Cox J."/>
            <person name="Jensen T.S."/>
            <person name="Nigg E.A."/>
            <person name="Brunak S."/>
            <person name="Mann M."/>
        </authorList>
    </citation>
    <scope>PHOSPHORYLATION [LARGE SCALE ANALYSIS] AT SER-926</scope>
    <scope>IDENTIFICATION BY MASS SPECTROMETRY [LARGE SCALE ANALYSIS]</scope>
    <source>
        <tissue>Cervix carcinoma</tissue>
    </source>
</reference>
<reference key="10">
    <citation type="journal article" date="2011" name="BMC Syst. Biol.">
        <title>Initial characterization of the human central proteome.</title>
        <authorList>
            <person name="Burkard T.R."/>
            <person name="Planyavsky M."/>
            <person name="Kaupe I."/>
            <person name="Breitwieser F.P."/>
            <person name="Buerckstuemmer T."/>
            <person name="Bennett K.L."/>
            <person name="Superti-Furga G."/>
            <person name="Colinge J."/>
        </authorList>
    </citation>
    <scope>IDENTIFICATION BY MASS SPECTROMETRY [LARGE SCALE ANALYSIS]</scope>
</reference>
<reference key="11">
    <citation type="journal article" date="2012" name="Biochim. Biophys. Acta">
        <title>Roles of SAM and DDHD domains in mammalian intracellular phospholipase A1 KIAA0725p.</title>
        <authorList>
            <person name="Inoue H."/>
            <person name="Baba T."/>
            <person name="Sato S."/>
            <person name="Ohtsuki R."/>
            <person name="Takemori A."/>
            <person name="Watanabe T."/>
            <person name="Tagaya M."/>
            <person name="Tani K."/>
        </authorList>
    </citation>
    <scope>FUNCTION</scope>
    <scope>PHOSPHOLIPID-BINDING</scope>
</reference>
<reference key="12">
    <citation type="journal article" date="2013" name="J. Proteome Res.">
        <title>Toward a comprehensive characterization of a human cancer cell phosphoproteome.</title>
        <authorList>
            <person name="Zhou H."/>
            <person name="Di Palma S."/>
            <person name="Preisinger C."/>
            <person name="Peng M."/>
            <person name="Polat A.N."/>
            <person name="Heck A.J."/>
            <person name="Mohammed S."/>
        </authorList>
    </citation>
    <scope>PHOSPHORYLATION [LARGE SCALE ANALYSIS] AT SER-926</scope>
    <scope>IDENTIFICATION BY MASS SPECTROMETRY [LARGE SCALE ANALYSIS]</scope>
    <source>
        <tissue>Cervix carcinoma</tissue>
        <tissue>Erythroleukemia</tissue>
    </source>
</reference>
<reference key="13">
    <citation type="journal article" date="2014" name="J. Proteomics">
        <title>An enzyme assisted RP-RPLC approach for in-depth analysis of human liver phosphoproteome.</title>
        <authorList>
            <person name="Bian Y."/>
            <person name="Song C."/>
            <person name="Cheng K."/>
            <person name="Dong M."/>
            <person name="Wang F."/>
            <person name="Huang J."/>
            <person name="Sun D."/>
            <person name="Wang L."/>
            <person name="Ye M."/>
            <person name="Zou H."/>
        </authorList>
    </citation>
    <scope>PHOSPHORYLATION [LARGE SCALE ANALYSIS] AT SER-926</scope>
    <scope>IDENTIFICATION BY MASS SPECTROMETRY [LARGE SCALE ANALYSIS]</scope>
    <source>
        <tissue>Liver</tissue>
    </source>
</reference>